<sequence length="150" mass="16309">MAFHSTLLVFLAGLVFLSEAAPLVSHGSVDSKCPLMVKVLDAVRGSPAANVAVKVFKKAADGTWQDFATGKTTEFGEIHELTTEEQFVEGVYRVEFDTSSYWKGLGLSPFHEYADVVFTANDSGHRHYTIAALLSPFSYSTTAVVSDPQE</sequence>
<proteinExistence type="evidence at protein level"/>
<comment type="function">
    <text evidence="3">Thyroid hormone-binding protein. Probably transports thyroxine from the bloodstream to the brain.</text>
</comment>
<comment type="subunit">
    <text evidence="3 4">Homotetramer. Dimer of dimers. In the homotetramer, subunits assemble around a central channel that can accommodate two ligand molecules.</text>
</comment>
<comment type="interaction">
    <interactant intactId="EBI-6622511">
        <id>P27731</id>
    </interactant>
    <interactant intactId="EBI-6622456">
        <id>P41263</id>
        <label>RBP4</label>
    </interactant>
    <organismsDiffer>false</organismsDiffer>
    <experiments>4</experiments>
</comment>
<comment type="subcellular location">
    <subcellularLocation>
        <location evidence="3 4">Secreted</location>
    </subcellularLocation>
</comment>
<comment type="tissue specificity">
    <text evidence="2 3 4">Detected in serum (at protein level). Detected in liver and choroid plexus.</text>
</comment>
<comment type="PTM">
    <text evidence="1">Sulfonation of the reactive cysteine Cys-33 enhances the stability of the native conformation of TTR, avoiding misassembly of the protein leading to amyloid formation.</text>
</comment>
<comment type="similarity">
    <text evidence="5">Belongs to the transthyretin family.</text>
</comment>
<protein>
    <recommendedName>
        <fullName>Transthyretin</fullName>
    </recommendedName>
    <alternativeName>
        <fullName>Prealbumin</fullName>
    </alternativeName>
    <alternativeName>
        <fullName>TBPA</fullName>
    </alternativeName>
</protein>
<accession>P27731</accession>
<reference key="1">
    <citation type="journal article" date="1991" name="Eur. J. Biochem.">
        <title>Isolation, characterization, cDNA cloning and gene expression of an avian transthyretin. Implications for the evolution of structure and function of transthyretin in vertebrates.</title>
        <authorList>
            <person name="Duan W."/>
            <person name="Achen M.G."/>
            <person name="Richardson S.J."/>
            <person name="Lawrence M.C."/>
            <person name="Wettenhall R.E.H."/>
            <person name="Jaworowski A."/>
            <person name="Schreiber G."/>
        </authorList>
    </citation>
    <scope>NUCLEOTIDE SEQUENCE [MRNA]</scope>
    <scope>PROTEIN SEQUENCE OF 21-40</scope>
    <scope>FUNCTION</scope>
    <scope>SUBCELLULAR LOCATION</scope>
    <scope>SUBUNIT</scope>
    <scope>TISSUE SPECIFICITY</scope>
    <source>
        <strain>White leghorn</strain>
        <tissue>Liver</tissue>
    </source>
</reference>
<reference key="2">
    <citation type="journal article" date="1991" name="Comp. Biochem. Physiol.">
        <title>Ontogenesis of transthyretin gene expression in chicken choroid plexus and liver.</title>
        <authorList>
            <person name="Southwell B.R."/>
            <person name="Duan W."/>
            <person name="Tu G.F."/>
            <person name="Schreiber G."/>
        </authorList>
    </citation>
    <scope>TISSUE SPECIFICITY</scope>
</reference>
<reference key="3">
    <citation type="journal article" date="1996" name="Eur. J. Biochem.">
        <title>The crystal structure of transthyretin from chicken.</title>
        <authorList>
            <person name="Sunde M."/>
            <person name="Richardson S.J."/>
            <person name="Chang L."/>
            <person name="Pettersson T.M."/>
            <person name="Schreiber G."/>
            <person name="Blake C.C.F."/>
        </authorList>
    </citation>
    <scope>X-RAY CRYSTALLOGRAPHY (2.9 ANGSTROMS)</scope>
    <scope>SUBUNIT</scope>
    <scope>SUBCELLULAR LOCATION</scope>
    <scope>TISSUE SPECIFICITY</scope>
</reference>
<dbReference type="EMBL" id="X60471">
    <property type="protein sequence ID" value="CAA43000.1"/>
    <property type="molecule type" value="mRNA"/>
</dbReference>
<dbReference type="PIR" id="S17827">
    <property type="entry name" value="S17827"/>
</dbReference>
<dbReference type="RefSeq" id="NP_990666.1">
    <property type="nucleotide sequence ID" value="NM_205335.3"/>
</dbReference>
<dbReference type="PDB" id="1TFP">
    <property type="method" value="X-ray"/>
    <property type="resolution" value="2.90 A"/>
    <property type="chains" value="A/B=21-150"/>
</dbReference>
<dbReference type="PDBsum" id="1TFP"/>
<dbReference type="SMR" id="P27731"/>
<dbReference type="FunCoup" id="P27731">
    <property type="interactions" value="1249"/>
</dbReference>
<dbReference type="IntAct" id="P27731">
    <property type="interactions" value="1"/>
</dbReference>
<dbReference type="STRING" id="9031.ENSGALP00000024388"/>
<dbReference type="PaxDb" id="9031-ENSGALP00000024388"/>
<dbReference type="Ensembl" id="ENSGALT00000129775">
    <property type="protein sequence ID" value="ENSGALP00000095290"/>
    <property type="gene ID" value="ENSGALG00000015143"/>
</dbReference>
<dbReference type="Ensembl" id="ENSGALT00010014515.1">
    <property type="protein sequence ID" value="ENSGALP00010008532.1"/>
    <property type="gene ID" value="ENSGALG00010006069.1"/>
</dbReference>
<dbReference type="GeneID" id="396277"/>
<dbReference type="KEGG" id="gga:396277"/>
<dbReference type="CTD" id="7276"/>
<dbReference type="VEuPathDB" id="HostDB:geneid_396277"/>
<dbReference type="eggNOG" id="KOG3006">
    <property type="taxonomic scope" value="Eukaryota"/>
</dbReference>
<dbReference type="GeneTree" id="ENSGT00940000153229"/>
<dbReference type="HOGENOM" id="CLU_115536_2_0_1"/>
<dbReference type="InParanoid" id="P27731"/>
<dbReference type="OrthoDB" id="10265230at2759"/>
<dbReference type="PhylomeDB" id="P27731"/>
<dbReference type="TreeFam" id="TF300210"/>
<dbReference type="EvolutionaryTrace" id="P27731"/>
<dbReference type="PRO" id="PR:P27731"/>
<dbReference type="Proteomes" id="UP000000539">
    <property type="component" value="Chromosome 2"/>
</dbReference>
<dbReference type="GO" id="GO:0030136">
    <property type="term" value="C:clathrin-coated vesicle"/>
    <property type="evidence" value="ECO:0000314"/>
    <property type="project" value="AgBase"/>
</dbReference>
<dbReference type="GO" id="GO:0005615">
    <property type="term" value="C:extracellular space"/>
    <property type="evidence" value="ECO:0000314"/>
    <property type="project" value="AgBase"/>
</dbReference>
<dbReference type="GO" id="GO:0032991">
    <property type="term" value="C:protein-containing complex"/>
    <property type="evidence" value="ECO:0000314"/>
    <property type="project" value="AgBase"/>
</dbReference>
<dbReference type="GO" id="GO:0060417">
    <property type="term" value="C:yolk"/>
    <property type="evidence" value="ECO:0000314"/>
    <property type="project" value="AgBase"/>
</dbReference>
<dbReference type="GO" id="GO:0005179">
    <property type="term" value="F:hormone activity"/>
    <property type="evidence" value="ECO:0007669"/>
    <property type="project" value="UniProtKB-KW"/>
</dbReference>
<dbReference type="GO" id="GO:0042562">
    <property type="term" value="F:hormone binding"/>
    <property type="evidence" value="ECO:0000247"/>
    <property type="project" value="AgBase"/>
</dbReference>
<dbReference type="GO" id="GO:0019904">
    <property type="term" value="F:protein domain specific binding"/>
    <property type="evidence" value="ECO:0000353"/>
    <property type="project" value="AgBase"/>
</dbReference>
<dbReference type="GO" id="GO:0046982">
    <property type="term" value="F:protein heterodimerization activity"/>
    <property type="evidence" value="ECO:0000247"/>
    <property type="project" value="AgBase"/>
</dbReference>
<dbReference type="GO" id="GO:0036094">
    <property type="term" value="F:small molecule binding"/>
    <property type="evidence" value="ECO:0000353"/>
    <property type="project" value="AgBase"/>
</dbReference>
<dbReference type="GO" id="GO:0070324">
    <property type="term" value="F:thyroid hormone binding"/>
    <property type="evidence" value="ECO:0000314"/>
    <property type="project" value="AgBase"/>
</dbReference>
<dbReference type="GO" id="GO:0001555">
    <property type="term" value="P:oocyte growth"/>
    <property type="evidence" value="ECO:0000270"/>
    <property type="project" value="AgBase"/>
</dbReference>
<dbReference type="GO" id="GO:0051262">
    <property type="term" value="P:protein tetramerization"/>
    <property type="evidence" value="ECO:0000314"/>
    <property type="project" value="AgBase"/>
</dbReference>
<dbReference type="GO" id="GO:0065003">
    <property type="term" value="P:protein-containing complex assembly"/>
    <property type="evidence" value="ECO:0000314"/>
    <property type="project" value="AgBase"/>
</dbReference>
<dbReference type="GO" id="GO:0009615">
    <property type="term" value="P:response to virus"/>
    <property type="evidence" value="ECO:0000314"/>
    <property type="project" value="AgBase"/>
</dbReference>
<dbReference type="GO" id="GO:0042572">
    <property type="term" value="P:retinol metabolic process"/>
    <property type="evidence" value="ECO:0000247"/>
    <property type="project" value="AgBase"/>
</dbReference>
<dbReference type="GO" id="GO:0070327">
    <property type="term" value="P:thyroid hormone transport"/>
    <property type="evidence" value="ECO:0000304"/>
    <property type="project" value="AgBase"/>
</dbReference>
<dbReference type="CDD" id="cd05821">
    <property type="entry name" value="TLP_Transthyretin"/>
    <property type="match status" value="1"/>
</dbReference>
<dbReference type="FunFam" id="2.60.40.180:FF:000002">
    <property type="entry name" value="Transthyretin"/>
    <property type="match status" value="1"/>
</dbReference>
<dbReference type="Gene3D" id="2.60.40.180">
    <property type="entry name" value="Transthyretin/hydroxyisourate hydrolase domain"/>
    <property type="match status" value="1"/>
</dbReference>
<dbReference type="InterPro" id="IPR023418">
    <property type="entry name" value="Thyroxine_BS"/>
</dbReference>
<dbReference type="InterPro" id="IPR000895">
    <property type="entry name" value="Transthyretin/HIU_hydrolase"/>
</dbReference>
<dbReference type="InterPro" id="IPR023416">
    <property type="entry name" value="Transthyretin/HIU_hydrolase_d"/>
</dbReference>
<dbReference type="InterPro" id="IPR036817">
    <property type="entry name" value="Transthyretin/HIU_hydrolase_sf"/>
</dbReference>
<dbReference type="InterPro" id="IPR023419">
    <property type="entry name" value="Transthyretin_CS"/>
</dbReference>
<dbReference type="PANTHER" id="PTHR10395:SF12">
    <property type="entry name" value="TRANSTHYRETIN"/>
    <property type="match status" value="1"/>
</dbReference>
<dbReference type="PANTHER" id="PTHR10395">
    <property type="entry name" value="URICASE AND TRANSTHYRETIN-RELATED"/>
    <property type="match status" value="1"/>
</dbReference>
<dbReference type="Pfam" id="PF00576">
    <property type="entry name" value="Transthyretin"/>
    <property type="match status" value="1"/>
</dbReference>
<dbReference type="PRINTS" id="PR00189">
    <property type="entry name" value="TRNSTHYRETIN"/>
</dbReference>
<dbReference type="SMART" id="SM00095">
    <property type="entry name" value="TR_THY"/>
    <property type="match status" value="1"/>
</dbReference>
<dbReference type="SUPFAM" id="SSF49472">
    <property type="entry name" value="Transthyretin (synonym: prealbumin)"/>
    <property type="match status" value="1"/>
</dbReference>
<dbReference type="PROSITE" id="PS00768">
    <property type="entry name" value="TRANSTHYRETIN_1"/>
    <property type="match status" value="1"/>
</dbReference>
<dbReference type="PROSITE" id="PS00769">
    <property type="entry name" value="TRANSTHYRETIN_2"/>
    <property type="match status" value="1"/>
</dbReference>
<organism>
    <name type="scientific">Gallus gallus</name>
    <name type="common">Chicken</name>
    <dbReference type="NCBI Taxonomy" id="9031"/>
    <lineage>
        <taxon>Eukaryota</taxon>
        <taxon>Metazoa</taxon>
        <taxon>Chordata</taxon>
        <taxon>Craniata</taxon>
        <taxon>Vertebrata</taxon>
        <taxon>Euteleostomi</taxon>
        <taxon>Archelosauria</taxon>
        <taxon>Archosauria</taxon>
        <taxon>Dinosauria</taxon>
        <taxon>Saurischia</taxon>
        <taxon>Theropoda</taxon>
        <taxon>Coelurosauria</taxon>
        <taxon>Aves</taxon>
        <taxon>Neognathae</taxon>
        <taxon>Galloanserae</taxon>
        <taxon>Galliformes</taxon>
        <taxon>Phasianidae</taxon>
        <taxon>Phasianinae</taxon>
        <taxon>Gallus</taxon>
    </lineage>
</organism>
<name>TTHY_CHICK</name>
<gene>
    <name type="primary">TTR</name>
</gene>
<evidence type="ECO:0000250" key="1">
    <source>
        <dbReference type="UniProtKB" id="P02766"/>
    </source>
</evidence>
<evidence type="ECO:0000269" key="2">
    <source>
    </source>
</evidence>
<evidence type="ECO:0000269" key="3">
    <source>
    </source>
</evidence>
<evidence type="ECO:0000269" key="4">
    <source>
    </source>
</evidence>
<evidence type="ECO:0000305" key="5"/>
<evidence type="ECO:0007829" key="6">
    <source>
        <dbReference type="PDB" id="1TFP"/>
    </source>
</evidence>
<feature type="signal peptide" evidence="3">
    <location>
        <begin position="1"/>
        <end position="20"/>
    </location>
</feature>
<feature type="chain" id="PRO_0000035768" description="Transthyretin">
    <location>
        <begin position="21"/>
        <end position="150"/>
    </location>
</feature>
<feature type="binding site" evidence="1">
    <location>
        <position position="38"/>
    </location>
    <ligand>
        <name>L-thyroxine</name>
        <dbReference type="ChEBI" id="CHEBI:58448"/>
    </ligand>
</feature>
<feature type="binding site" evidence="1">
    <location>
        <position position="77"/>
    </location>
    <ligand>
        <name>L-thyroxine</name>
        <dbReference type="ChEBI" id="CHEBI:58448"/>
    </ligand>
</feature>
<feature type="binding site" evidence="1">
    <location>
        <position position="140"/>
    </location>
    <ligand>
        <name>L-thyroxine</name>
        <dbReference type="ChEBI" id="CHEBI:58448"/>
    </ligand>
</feature>
<feature type="modified residue" description="Sulfocysteine" evidence="1">
    <location>
        <position position="33"/>
    </location>
</feature>
<feature type="strand" evidence="6">
    <location>
        <begin position="35"/>
        <end position="41"/>
    </location>
</feature>
<feature type="turn" evidence="6">
    <location>
        <begin position="42"/>
        <end position="45"/>
    </location>
</feature>
<feature type="strand" evidence="6">
    <location>
        <begin position="52"/>
        <end position="58"/>
    </location>
</feature>
<feature type="strand" evidence="6">
    <location>
        <begin position="64"/>
        <end position="71"/>
    </location>
</feature>
<feature type="turn" evidence="6">
    <location>
        <begin position="84"/>
        <end position="86"/>
    </location>
</feature>
<feature type="strand" evidence="6">
    <location>
        <begin position="89"/>
        <end position="97"/>
    </location>
</feature>
<feature type="turn" evidence="6">
    <location>
        <begin position="99"/>
        <end position="106"/>
    </location>
</feature>
<feature type="strand" evidence="6">
    <location>
        <begin position="113"/>
        <end position="120"/>
    </location>
</feature>
<feature type="strand" evidence="6">
    <location>
        <begin position="122"/>
        <end position="124"/>
    </location>
</feature>
<feature type="strand" evidence="6">
    <location>
        <begin position="128"/>
        <end position="134"/>
    </location>
</feature>
<feature type="strand" evidence="6">
    <location>
        <begin position="136"/>
        <end position="145"/>
    </location>
</feature>
<keyword id="KW-0002">3D-structure</keyword>
<keyword id="KW-0903">Direct protein sequencing</keyword>
<keyword id="KW-0372">Hormone</keyword>
<keyword id="KW-1185">Reference proteome</keyword>
<keyword id="KW-0964">Secreted</keyword>
<keyword id="KW-0732">Signal</keyword>
<keyword id="KW-0765">Sulfation</keyword>
<keyword id="KW-0795">Thyroid hormone</keyword>
<keyword id="KW-0813">Transport</keyword>